<gene>
    <name type="primary">rpc6</name>
    <name type="synonym">rpc34</name>
    <name type="ORF">SPCC290.02</name>
</gene>
<name>RPC6_SCHPO</name>
<organism>
    <name type="scientific">Schizosaccharomyces pombe (strain 972 / ATCC 24843)</name>
    <name type="common">Fission yeast</name>
    <dbReference type="NCBI Taxonomy" id="284812"/>
    <lineage>
        <taxon>Eukaryota</taxon>
        <taxon>Fungi</taxon>
        <taxon>Dikarya</taxon>
        <taxon>Ascomycota</taxon>
        <taxon>Taphrinomycotina</taxon>
        <taxon>Schizosaccharomycetes</taxon>
        <taxon>Schizosaccharomycetales</taxon>
        <taxon>Schizosaccharomycetaceae</taxon>
        <taxon>Schizosaccharomyces</taxon>
    </lineage>
</organism>
<protein>
    <recommendedName>
        <fullName>Probable DNA-directed RNA polymerase III subunit rpc6</fullName>
        <shortName>RNA polymerase III subunit C6</shortName>
    </recommendedName>
    <alternativeName>
        <fullName>DNA-directed RNA polymerase III 34 kDa polypeptide</fullName>
    </alternativeName>
    <alternativeName>
        <fullName>RNA polymerase III subunit C34</fullName>
    </alternativeName>
</protein>
<accession>O94553</accession>
<accession>Q0QYE7</accession>
<sequence>MADQLRTLPKNAKVIYEHCLKQIPNSLSQQDLVEAIGASISVNDLSSALNILLSRRLLDPLRQGNVLVYRAVRLDEAKTVSTMEGDEQIVYSFIKNSGNEGIWRKTLTLRTNLHVSVVDRCLKSLESKNLVKSIKSVKNPTRKIYMLYDLVPSTELTGGPWFTDQELDVEFIENLKKVIYRYVHSKSFPPKKAAMGPDLVWGPEYNGYPTALQIHNWLRSTNITKVDLSLANVISLVDVLIYDGKVEKRSDGASYRAIRVNNENIDAFTESPCGNCPVSDICDANSRVNPITCEYLDKWLN</sequence>
<proteinExistence type="evidence at transcript level"/>
<keyword id="KW-0240">DNA-directed RNA polymerase</keyword>
<keyword id="KW-0539">Nucleus</keyword>
<keyword id="KW-1185">Reference proteome</keyword>
<keyword id="KW-0804">Transcription</keyword>
<feature type="chain" id="PRO_0000073976" description="Probable DNA-directed RNA polymerase III subunit rpc6">
    <location>
        <begin position="1"/>
        <end position="301"/>
    </location>
</feature>
<reference key="1">
    <citation type="journal article" date="2006" name="Nucleic Acids Res.">
        <title>Ancient origin, functional conservation and fast evolution of DNA-dependent RNA polymerase III.</title>
        <authorList>
            <person name="Proshkina G.M."/>
            <person name="Shematorova E.K."/>
            <person name="Proshkin S.A."/>
            <person name="Zaros C."/>
            <person name="Thuriaux P."/>
            <person name="Shpakovski G.V."/>
        </authorList>
    </citation>
    <scope>NUCLEOTIDE SEQUENCE [MRNA]</scope>
    <source>
        <strain>972 / ATCC 24843</strain>
    </source>
</reference>
<reference key="2">
    <citation type="journal article" date="2002" name="Nature">
        <title>The genome sequence of Schizosaccharomyces pombe.</title>
        <authorList>
            <person name="Wood V."/>
            <person name="Gwilliam R."/>
            <person name="Rajandream M.A."/>
            <person name="Lyne M.H."/>
            <person name="Lyne R."/>
            <person name="Stewart A."/>
            <person name="Sgouros J.G."/>
            <person name="Peat N."/>
            <person name="Hayles J."/>
            <person name="Baker S.G."/>
            <person name="Basham D."/>
            <person name="Bowman S."/>
            <person name="Brooks K."/>
            <person name="Brown D."/>
            <person name="Brown S."/>
            <person name="Chillingworth T."/>
            <person name="Churcher C.M."/>
            <person name="Collins M."/>
            <person name="Connor R."/>
            <person name="Cronin A."/>
            <person name="Davis P."/>
            <person name="Feltwell T."/>
            <person name="Fraser A."/>
            <person name="Gentles S."/>
            <person name="Goble A."/>
            <person name="Hamlin N."/>
            <person name="Harris D.E."/>
            <person name="Hidalgo J."/>
            <person name="Hodgson G."/>
            <person name="Holroyd S."/>
            <person name="Hornsby T."/>
            <person name="Howarth S."/>
            <person name="Huckle E.J."/>
            <person name="Hunt S."/>
            <person name="Jagels K."/>
            <person name="James K.D."/>
            <person name="Jones L."/>
            <person name="Jones M."/>
            <person name="Leather S."/>
            <person name="McDonald S."/>
            <person name="McLean J."/>
            <person name="Mooney P."/>
            <person name="Moule S."/>
            <person name="Mungall K.L."/>
            <person name="Murphy L.D."/>
            <person name="Niblett D."/>
            <person name="Odell C."/>
            <person name="Oliver K."/>
            <person name="O'Neil S."/>
            <person name="Pearson D."/>
            <person name="Quail M.A."/>
            <person name="Rabbinowitsch E."/>
            <person name="Rutherford K.M."/>
            <person name="Rutter S."/>
            <person name="Saunders D."/>
            <person name="Seeger K."/>
            <person name="Sharp S."/>
            <person name="Skelton J."/>
            <person name="Simmonds M.N."/>
            <person name="Squares R."/>
            <person name="Squares S."/>
            <person name="Stevens K."/>
            <person name="Taylor K."/>
            <person name="Taylor R.G."/>
            <person name="Tivey A."/>
            <person name="Walsh S.V."/>
            <person name="Warren T."/>
            <person name="Whitehead S."/>
            <person name="Woodward J.R."/>
            <person name="Volckaert G."/>
            <person name="Aert R."/>
            <person name="Robben J."/>
            <person name="Grymonprez B."/>
            <person name="Weltjens I."/>
            <person name="Vanstreels E."/>
            <person name="Rieger M."/>
            <person name="Schaefer M."/>
            <person name="Mueller-Auer S."/>
            <person name="Gabel C."/>
            <person name="Fuchs M."/>
            <person name="Duesterhoeft A."/>
            <person name="Fritzc C."/>
            <person name="Holzer E."/>
            <person name="Moestl D."/>
            <person name="Hilbert H."/>
            <person name="Borzym K."/>
            <person name="Langer I."/>
            <person name="Beck A."/>
            <person name="Lehrach H."/>
            <person name="Reinhardt R."/>
            <person name="Pohl T.M."/>
            <person name="Eger P."/>
            <person name="Zimmermann W."/>
            <person name="Wedler H."/>
            <person name="Wambutt R."/>
            <person name="Purnelle B."/>
            <person name="Goffeau A."/>
            <person name="Cadieu E."/>
            <person name="Dreano S."/>
            <person name="Gloux S."/>
            <person name="Lelaure V."/>
            <person name="Mottier S."/>
            <person name="Galibert F."/>
            <person name="Aves S.J."/>
            <person name="Xiang Z."/>
            <person name="Hunt C."/>
            <person name="Moore K."/>
            <person name="Hurst S.M."/>
            <person name="Lucas M."/>
            <person name="Rochet M."/>
            <person name="Gaillardin C."/>
            <person name="Tallada V.A."/>
            <person name="Garzon A."/>
            <person name="Thode G."/>
            <person name="Daga R.R."/>
            <person name="Cruzado L."/>
            <person name="Jimenez J."/>
            <person name="Sanchez M."/>
            <person name="del Rey F."/>
            <person name="Benito J."/>
            <person name="Dominguez A."/>
            <person name="Revuelta J.L."/>
            <person name="Moreno S."/>
            <person name="Armstrong J."/>
            <person name="Forsburg S.L."/>
            <person name="Cerutti L."/>
            <person name="Lowe T."/>
            <person name="McCombie W.R."/>
            <person name="Paulsen I."/>
            <person name="Potashkin J."/>
            <person name="Shpakovski G.V."/>
            <person name="Ussery D."/>
            <person name="Barrell B.G."/>
            <person name="Nurse P."/>
        </authorList>
    </citation>
    <scope>NUCLEOTIDE SEQUENCE [LARGE SCALE GENOMIC DNA]</scope>
    <source>
        <strain>972 / ATCC 24843</strain>
    </source>
</reference>
<evidence type="ECO:0000250" key="1"/>
<evidence type="ECO:0000305" key="2"/>
<dbReference type="EMBL" id="DQ156223">
    <property type="protein sequence ID" value="ABA54851.1"/>
    <property type="molecule type" value="mRNA"/>
</dbReference>
<dbReference type="EMBL" id="CU329672">
    <property type="protein sequence ID" value="CAA22872.1"/>
    <property type="molecule type" value="Genomic_DNA"/>
</dbReference>
<dbReference type="PIR" id="T41266">
    <property type="entry name" value="T41266"/>
</dbReference>
<dbReference type="RefSeq" id="NP_588398.1">
    <property type="nucleotide sequence ID" value="NM_001023389.2"/>
</dbReference>
<dbReference type="SMR" id="O94553"/>
<dbReference type="BioGRID" id="275566">
    <property type="interactions" value="4"/>
</dbReference>
<dbReference type="ComplexPortal" id="CPX-8905">
    <property type="entry name" value="DNA-directed RNA polymerase III complex"/>
</dbReference>
<dbReference type="FunCoup" id="O94553">
    <property type="interactions" value="481"/>
</dbReference>
<dbReference type="STRING" id="284812.O94553"/>
<dbReference type="iPTMnet" id="O94553"/>
<dbReference type="PaxDb" id="4896-SPCC290.02.1"/>
<dbReference type="EnsemblFungi" id="SPCC290.02.1">
    <property type="protein sequence ID" value="SPCC290.02.1:pep"/>
    <property type="gene ID" value="SPCC290.02"/>
</dbReference>
<dbReference type="GeneID" id="2538992"/>
<dbReference type="KEGG" id="spo:2538992"/>
<dbReference type="PomBase" id="SPCC290.02"/>
<dbReference type="VEuPathDB" id="FungiDB:SPCC290.02"/>
<dbReference type="eggNOG" id="KOG3233">
    <property type="taxonomic scope" value="Eukaryota"/>
</dbReference>
<dbReference type="HOGENOM" id="CLU_033661_1_0_1"/>
<dbReference type="InParanoid" id="O94553"/>
<dbReference type="OMA" id="VGTTKKC"/>
<dbReference type="PhylomeDB" id="O94553"/>
<dbReference type="Reactome" id="R-SPO-76061">
    <property type="pathway name" value="RNA Polymerase III Transcription Initiation From Type 1 Promoter"/>
</dbReference>
<dbReference type="Reactome" id="R-SPO-76066">
    <property type="pathway name" value="RNA Polymerase III Transcription Initiation From Type 2 Promoter"/>
</dbReference>
<dbReference type="PRO" id="PR:O94553"/>
<dbReference type="Proteomes" id="UP000002485">
    <property type="component" value="Chromosome III"/>
</dbReference>
<dbReference type="GO" id="GO:0005829">
    <property type="term" value="C:cytosol"/>
    <property type="evidence" value="ECO:0007005"/>
    <property type="project" value="PomBase"/>
</dbReference>
<dbReference type="GO" id="GO:0005634">
    <property type="term" value="C:nucleus"/>
    <property type="evidence" value="ECO:0007005"/>
    <property type="project" value="PomBase"/>
</dbReference>
<dbReference type="GO" id="GO:0005666">
    <property type="term" value="C:RNA polymerase III complex"/>
    <property type="evidence" value="ECO:0000318"/>
    <property type="project" value="GO_Central"/>
</dbReference>
<dbReference type="GO" id="GO:0003899">
    <property type="term" value="F:DNA-directed RNA polymerase activity"/>
    <property type="evidence" value="ECO:0000266"/>
    <property type="project" value="PomBase"/>
</dbReference>
<dbReference type="GO" id="GO:0006383">
    <property type="term" value="P:transcription by RNA polymerase III"/>
    <property type="evidence" value="ECO:0000266"/>
    <property type="project" value="PomBase"/>
</dbReference>
<dbReference type="FunFam" id="1.10.10.10:FF:000116">
    <property type="entry name" value="DNA-directed RNA polymerase III subunit RPC6"/>
    <property type="match status" value="1"/>
</dbReference>
<dbReference type="FunFam" id="1.10.10.10:FF:000237">
    <property type="entry name" value="DNA-directed RNA polymerase III subunit RPC6"/>
    <property type="match status" value="1"/>
</dbReference>
<dbReference type="Gene3D" id="1.10.10.10">
    <property type="entry name" value="Winged helix-like DNA-binding domain superfamily/Winged helix DNA-binding domain"/>
    <property type="match status" value="2"/>
</dbReference>
<dbReference type="InterPro" id="IPR007832">
    <property type="entry name" value="RNA_pol_Rpc34"/>
</dbReference>
<dbReference type="InterPro" id="IPR016049">
    <property type="entry name" value="RNA_pol_Rpc34-like"/>
</dbReference>
<dbReference type="InterPro" id="IPR036388">
    <property type="entry name" value="WH-like_DNA-bd_sf"/>
</dbReference>
<dbReference type="InterPro" id="IPR036390">
    <property type="entry name" value="WH_DNA-bd_sf"/>
</dbReference>
<dbReference type="PANTHER" id="PTHR12780">
    <property type="entry name" value="RNA POLYMERASE III DNA DIRECTED , 39KD SUBUNIT-RELATED"/>
    <property type="match status" value="1"/>
</dbReference>
<dbReference type="Pfam" id="PF05158">
    <property type="entry name" value="RNA_pol_Rpc34"/>
    <property type="match status" value="1"/>
</dbReference>
<dbReference type="PIRSF" id="PIRSF028763">
    <property type="entry name" value="RNA_pol_Rpc34"/>
    <property type="match status" value="1"/>
</dbReference>
<dbReference type="SUPFAM" id="SSF46785">
    <property type="entry name" value="Winged helix' DNA-binding domain"/>
    <property type="match status" value="2"/>
</dbReference>
<comment type="function">
    <text>DNA-dependent RNA polymerase catalyzes the transcription of DNA into RNA using the four ribonucleoside triphosphates as substrates. Specific peripheric component of RNA polymerase III which synthesizes small RNAs, such as 5S rRNA and tRNAs.</text>
</comment>
<comment type="subunit">
    <text evidence="1">Component of the RNA polymerase III (Pol III) complex consisting of 17 subunits (By similarity). Interacts with TFIIB.</text>
</comment>
<comment type="subcellular location">
    <subcellularLocation>
        <location evidence="1">Nucleus</location>
    </subcellularLocation>
</comment>
<comment type="similarity">
    <text evidence="2">Belongs to the eukaryotic RPC34/RPC39 RNA polymerase subunit family.</text>
</comment>